<sequence>MTDTPNSPSKSTTKSASSSTKVIDSLHSKIDELTDELTALKQSHQELTKKHSITAKKNDSFVDQLANAKHENDMLSALLKRKERRILDLEDQFNELTSQNESLVLSNKNMKIRCENLQSNSNANIAEFERLKISYDALIASQMEYKNHYQQELNSLQTAFDNYKLENTRRFEELQTSIVSNDKDIDTLLDSLTNKRKAMDNIYVNKNNKVLQLLGNLAHLAKLHGQDTKSQVEQNVSVIEQLLAKHPDLQEKILEKEKIEVDLAEIIAHSNDVLANSSFDEDTTLINSPDLENNQNFNTTHSTSGSATPNSNSHSLQSKKRKNYKRNSLILKESPPIISENVPSSLPKKPQVNNNLINIPKARSKFNTPPTTPRQFTNHNNDFEVTHQWNGNNNINNHRRNNSVDSRSDNSQHRRNNSYDSRSDHGQHRRQPSQQNNNYNNNNYNNNNNNNNNNSNNGFVKRSGSVRNVNNYNNNNGNANNNGNNHGNKSKRRSTYNNNNNNNSKRNSQLFDNNFVLNV</sequence>
<protein>
    <recommendedName>
        <fullName>SWI5-dependent HO expression protein 3</fullName>
    </recommendedName>
</protein>
<name>SHE3_CANAL</name>
<gene>
    <name type="primary">SHE3</name>
    <name type="ordered locus">CAALFM_C603100WA</name>
    <name type="ORF">CaO19.13040</name>
    <name type="ORF">CaO19.5595</name>
</gene>
<keyword id="KW-0175">Coiled coil</keyword>
<keyword id="KW-0256">Endoplasmic reticulum</keyword>
<keyword id="KW-0472">Membrane</keyword>
<keyword id="KW-0509">mRNA transport</keyword>
<keyword id="KW-1185">Reference proteome</keyword>
<keyword id="KW-0694">RNA-binding</keyword>
<keyword id="KW-0813">Transport</keyword>
<evidence type="ECO:0000250" key="1"/>
<evidence type="ECO:0000255" key="2"/>
<evidence type="ECO:0000256" key="3">
    <source>
        <dbReference type="SAM" id="MobiDB-lite"/>
    </source>
</evidence>
<evidence type="ECO:0000305" key="4"/>
<organism>
    <name type="scientific">Candida albicans (strain SC5314 / ATCC MYA-2876)</name>
    <name type="common">Yeast</name>
    <dbReference type="NCBI Taxonomy" id="237561"/>
    <lineage>
        <taxon>Eukaryota</taxon>
        <taxon>Fungi</taxon>
        <taxon>Dikarya</taxon>
        <taxon>Ascomycota</taxon>
        <taxon>Saccharomycotina</taxon>
        <taxon>Pichiomycetes</taxon>
        <taxon>Debaryomycetaceae</taxon>
        <taxon>Candida/Lodderomyces clade</taxon>
        <taxon>Candida</taxon>
    </lineage>
</organism>
<comment type="function">
    <text evidence="1">RNA-binding protein that binds specific mRNAs including the ASH1 mRNA, coding for a repressor of the HO endonuclease. Part of the mRNA localization machinery that restricts accumulation of certain proteins to the bud and in the daughter cell. Required for the delivery of cortical endoplasmic reticulum into the emerging bud (By similarity).</text>
</comment>
<comment type="subcellular location">
    <subcellularLocation>
        <location evidence="1">Endoplasmic reticulum membrane</location>
        <topology evidence="1">Peripheral membrane protein</topology>
    </subcellularLocation>
</comment>
<comment type="similarity">
    <text evidence="4">Belongs to the SHE3 family.</text>
</comment>
<dbReference type="EMBL" id="CP017628">
    <property type="protein sequence ID" value="AOW30241.1"/>
    <property type="molecule type" value="Genomic_DNA"/>
</dbReference>
<dbReference type="RefSeq" id="XP_719156.2">
    <property type="nucleotide sequence ID" value="XM_714063.2"/>
</dbReference>
<dbReference type="SMR" id="Q5ABV6"/>
<dbReference type="BioGRID" id="1222256">
    <property type="interactions" value="1"/>
</dbReference>
<dbReference type="FunCoup" id="Q5ABV6">
    <property type="interactions" value="1481"/>
</dbReference>
<dbReference type="STRING" id="237561.Q5ABV6"/>
<dbReference type="EnsemblFungi" id="C6_03100W_A-T">
    <property type="protein sequence ID" value="C6_03100W_A-T-p1"/>
    <property type="gene ID" value="C6_03100W_A"/>
</dbReference>
<dbReference type="GeneID" id="3639277"/>
<dbReference type="KEGG" id="cal:CAALFM_C603100WA"/>
<dbReference type="CGD" id="CAL0000196918">
    <property type="gene designation" value="SHE3"/>
</dbReference>
<dbReference type="VEuPathDB" id="FungiDB:C6_03100W_A"/>
<dbReference type="HOGENOM" id="CLU_042310_0_0_1"/>
<dbReference type="InParanoid" id="Q5ABV6"/>
<dbReference type="OrthoDB" id="6088208at2759"/>
<dbReference type="PRO" id="PR:Q5ABV6"/>
<dbReference type="Proteomes" id="UP000000559">
    <property type="component" value="Chromosome 6"/>
</dbReference>
<dbReference type="GO" id="GO:0005789">
    <property type="term" value="C:endoplasmic reticulum membrane"/>
    <property type="evidence" value="ECO:0007669"/>
    <property type="project" value="UniProtKB-SubCell"/>
</dbReference>
<dbReference type="GO" id="GO:0003729">
    <property type="term" value="F:mRNA binding"/>
    <property type="evidence" value="ECO:0000314"/>
    <property type="project" value="CGD"/>
</dbReference>
<dbReference type="GO" id="GO:0009267">
    <property type="term" value="P:cellular response to starvation"/>
    <property type="evidence" value="ECO:0000315"/>
    <property type="project" value="CGD"/>
</dbReference>
<dbReference type="GO" id="GO:0048309">
    <property type="term" value="P:endoplasmic reticulum inheritance"/>
    <property type="evidence" value="ECO:0007669"/>
    <property type="project" value="InterPro"/>
</dbReference>
<dbReference type="GO" id="GO:0030447">
    <property type="term" value="P:filamentous growth"/>
    <property type="evidence" value="ECO:0000315"/>
    <property type="project" value="CGD"/>
</dbReference>
<dbReference type="GO" id="GO:0036180">
    <property type="term" value="P:filamentous growth of a population of unicellular organisms in response to biotic stimulus"/>
    <property type="evidence" value="ECO:0000315"/>
    <property type="project" value="CGD"/>
</dbReference>
<dbReference type="GO" id="GO:0036170">
    <property type="term" value="P:filamentous growth of a population of unicellular organisms in response to starvation"/>
    <property type="evidence" value="ECO:0000315"/>
    <property type="project" value="CGD"/>
</dbReference>
<dbReference type="GO" id="GO:0008298">
    <property type="term" value="P:intracellular mRNA localization"/>
    <property type="evidence" value="ECO:0000315"/>
    <property type="project" value="CGD"/>
</dbReference>
<dbReference type="GO" id="GO:0051028">
    <property type="term" value="P:mRNA transport"/>
    <property type="evidence" value="ECO:0007669"/>
    <property type="project" value="UniProtKB-KW"/>
</dbReference>
<dbReference type="GO" id="GO:0001897">
    <property type="term" value="P:symbiont-mediated cytolysis of host cell"/>
    <property type="evidence" value="ECO:0000315"/>
    <property type="project" value="CGD"/>
</dbReference>
<dbReference type="InterPro" id="IPR031398">
    <property type="entry name" value="She3"/>
</dbReference>
<dbReference type="Pfam" id="PF17078">
    <property type="entry name" value="SHE3"/>
    <property type="match status" value="1"/>
</dbReference>
<dbReference type="SUPFAM" id="SSF90257">
    <property type="entry name" value="Myosin rod fragments"/>
    <property type="match status" value="1"/>
</dbReference>
<proteinExistence type="inferred from homology"/>
<reference key="1">
    <citation type="journal article" date="2004" name="Proc. Natl. Acad. Sci. U.S.A.">
        <title>The diploid genome sequence of Candida albicans.</title>
        <authorList>
            <person name="Jones T."/>
            <person name="Federspiel N.A."/>
            <person name="Chibana H."/>
            <person name="Dungan J."/>
            <person name="Kalman S."/>
            <person name="Magee B.B."/>
            <person name="Newport G."/>
            <person name="Thorstenson Y.R."/>
            <person name="Agabian N."/>
            <person name="Magee P.T."/>
            <person name="Davis R.W."/>
            <person name="Scherer S."/>
        </authorList>
    </citation>
    <scope>NUCLEOTIDE SEQUENCE [LARGE SCALE GENOMIC DNA]</scope>
    <source>
        <strain>SC5314 / ATCC MYA-2876</strain>
    </source>
</reference>
<reference key="2">
    <citation type="journal article" date="2007" name="Genome Biol.">
        <title>Assembly of the Candida albicans genome into sixteen supercontigs aligned on the eight chromosomes.</title>
        <authorList>
            <person name="van het Hoog M."/>
            <person name="Rast T.J."/>
            <person name="Martchenko M."/>
            <person name="Grindle S."/>
            <person name="Dignard D."/>
            <person name="Hogues H."/>
            <person name="Cuomo C."/>
            <person name="Berriman M."/>
            <person name="Scherer S."/>
            <person name="Magee B.B."/>
            <person name="Whiteway M."/>
            <person name="Chibana H."/>
            <person name="Nantel A."/>
            <person name="Magee P.T."/>
        </authorList>
    </citation>
    <scope>GENOME REANNOTATION</scope>
    <source>
        <strain>SC5314 / ATCC MYA-2876</strain>
    </source>
</reference>
<reference key="3">
    <citation type="journal article" date="2013" name="Genome Biol.">
        <title>Assembly of a phased diploid Candida albicans genome facilitates allele-specific measurements and provides a simple model for repeat and indel structure.</title>
        <authorList>
            <person name="Muzzey D."/>
            <person name="Schwartz K."/>
            <person name="Weissman J.S."/>
            <person name="Sherlock G."/>
        </authorList>
    </citation>
    <scope>NUCLEOTIDE SEQUENCE [LARGE SCALE GENOMIC DNA]</scope>
    <scope>GENOME REANNOTATION</scope>
    <source>
        <strain>SC5314 / ATCC MYA-2876</strain>
    </source>
</reference>
<accession>Q5ABV6</accession>
<accession>A0A1D8PQ37</accession>
<feature type="chain" id="PRO_0000408928" description="SWI5-dependent HO expression protein 3">
    <location>
        <begin position="1"/>
        <end position="519"/>
    </location>
</feature>
<feature type="region of interest" description="Disordered" evidence="3">
    <location>
        <begin position="1"/>
        <end position="22"/>
    </location>
</feature>
<feature type="region of interest" description="Disordered" evidence="3">
    <location>
        <begin position="285"/>
        <end position="513"/>
    </location>
</feature>
<feature type="coiled-coil region" evidence="2">
    <location>
        <begin position="20"/>
        <end position="110"/>
    </location>
</feature>
<feature type="compositionally biased region" description="Low complexity" evidence="3">
    <location>
        <begin position="7"/>
        <end position="21"/>
    </location>
</feature>
<feature type="compositionally biased region" description="Polar residues" evidence="3">
    <location>
        <begin position="285"/>
        <end position="316"/>
    </location>
</feature>
<feature type="compositionally biased region" description="Polar residues" evidence="3">
    <location>
        <begin position="365"/>
        <end position="380"/>
    </location>
</feature>
<feature type="compositionally biased region" description="Low complexity" evidence="3">
    <location>
        <begin position="436"/>
        <end position="457"/>
    </location>
</feature>
<feature type="compositionally biased region" description="Low complexity" evidence="3">
    <location>
        <begin position="468"/>
        <end position="487"/>
    </location>
</feature>
<feature type="compositionally biased region" description="Low complexity" evidence="3">
    <location>
        <begin position="495"/>
        <end position="508"/>
    </location>
</feature>